<accession>Q9Z6P6</accession>
<keyword id="KW-0963">Cytoplasm</keyword>
<keyword id="KW-0456">Lyase</keyword>
<keyword id="KW-0816">Tricarboxylic acid cycle</keyword>
<evidence type="ECO:0000255" key="1">
    <source>
        <dbReference type="HAMAP-Rule" id="MF_00743"/>
    </source>
</evidence>
<feature type="chain" id="PRO_0000161268" description="Fumarate hydratase class II">
    <location>
        <begin position="1"/>
        <end position="460"/>
    </location>
</feature>
<feature type="active site" description="Proton donor/acceptor" evidence="1">
    <location>
        <position position="185"/>
    </location>
</feature>
<feature type="active site" evidence="1">
    <location>
        <position position="315"/>
    </location>
</feature>
<feature type="binding site" evidence="1">
    <location>
        <begin position="95"/>
        <end position="97"/>
    </location>
    <ligand>
        <name>substrate</name>
    </ligand>
</feature>
<feature type="binding site" description="in site B" evidence="1">
    <location>
        <begin position="126"/>
        <end position="129"/>
    </location>
    <ligand>
        <name>substrate</name>
    </ligand>
</feature>
<feature type="binding site" evidence="1">
    <location>
        <begin position="136"/>
        <end position="138"/>
    </location>
    <ligand>
        <name>substrate</name>
    </ligand>
</feature>
<feature type="binding site" evidence="1">
    <location>
        <position position="184"/>
    </location>
    <ligand>
        <name>substrate</name>
    </ligand>
</feature>
<feature type="binding site" evidence="1">
    <location>
        <position position="316"/>
    </location>
    <ligand>
        <name>substrate</name>
    </ligand>
</feature>
<feature type="binding site" evidence="1">
    <location>
        <begin position="321"/>
        <end position="323"/>
    </location>
    <ligand>
        <name>substrate</name>
    </ligand>
</feature>
<feature type="site" description="Important for catalytic activity" evidence="1">
    <location>
        <position position="328"/>
    </location>
</feature>
<gene>
    <name evidence="1" type="primary">fumC</name>
    <name type="ordered locus">CPn_1013</name>
    <name type="ordered locus">CP_0840</name>
    <name type="ordered locus">CpB1051</name>
</gene>
<organism>
    <name type="scientific">Chlamydia pneumoniae</name>
    <name type="common">Chlamydophila pneumoniae</name>
    <dbReference type="NCBI Taxonomy" id="83558"/>
    <lineage>
        <taxon>Bacteria</taxon>
        <taxon>Pseudomonadati</taxon>
        <taxon>Chlamydiota</taxon>
        <taxon>Chlamydiia</taxon>
        <taxon>Chlamydiales</taxon>
        <taxon>Chlamydiaceae</taxon>
        <taxon>Chlamydia/Chlamydophila group</taxon>
        <taxon>Chlamydia</taxon>
    </lineage>
</organism>
<comment type="function">
    <text evidence="1">Involved in the TCA cycle. Catalyzes the stereospecific interconversion of fumarate to L-malate.</text>
</comment>
<comment type="catalytic activity">
    <reaction evidence="1">
        <text>(S)-malate = fumarate + H2O</text>
        <dbReference type="Rhea" id="RHEA:12460"/>
        <dbReference type="ChEBI" id="CHEBI:15377"/>
        <dbReference type="ChEBI" id="CHEBI:15589"/>
        <dbReference type="ChEBI" id="CHEBI:29806"/>
        <dbReference type="EC" id="4.2.1.2"/>
    </reaction>
</comment>
<comment type="pathway">
    <text evidence="1">Carbohydrate metabolism; tricarboxylic acid cycle; (S)-malate from fumarate: step 1/1.</text>
</comment>
<comment type="subunit">
    <text evidence="1">Homotetramer.</text>
</comment>
<comment type="subcellular location">
    <subcellularLocation>
        <location evidence="1">Cytoplasm</location>
    </subcellularLocation>
</comment>
<comment type="miscellaneous">
    <text evidence="1">There are 2 substrate-binding sites: the catalytic A site, and the non-catalytic B site that may play a role in the transfer of substrate or product between the active site and the solvent. Alternatively, the B site may bind allosteric effectors.</text>
</comment>
<comment type="similarity">
    <text evidence="1">Belongs to the class-II fumarase/aspartase family. Fumarase subfamily.</text>
</comment>
<protein>
    <recommendedName>
        <fullName evidence="1">Fumarate hydratase class II</fullName>
        <shortName evidence="1">Fumarase C</shortName>
        <ecNumber evidence="1">4.2.1.2</ecNumber>
    </recommendedName>
    <alternativeName>
        <fullName evidence="1">Aerobic fumarase</fullName>
    </alternativeName>
    <alternativeName>
        <fullName evidence="1">Iron-independent fumarase</fullName>
    </alternativeName>
</protein>
<dbReference type="EC" id="4.2.1.2" evidence="1"/>
<dbReference type="EMBL" id="AE001363">
    <property type="protein sequence ID" value="AAD19150.1"/>
    <property type="molecule type" value="Genomic_DNA"/>
</dbReference>
<dbReference type="EMBL" id="AE002161">
    <property type="protein sequence ID" value="AAF38632.1"/>
    <property type="molecule type" value="Genomic_DNA"/>
</dbReference>
<dbReference type="EMBL" id="BA000008">
    <property type="protein sequence ID" value="BAA99220.1"/>
    <property type="molecule type" value="Genomic_DNA"/>
</dbReference>
<dbReference type="EMBL" id="AE009440">
    <property type="protein sequence ID" value="AAP98980.1"/>
    <property type="molecule type" value="Genomic_DNA"/>
</dbReference>
<dbReference type="PIR" id="A72009">
    <property type="entry name" value="A72009"/>
</dbReference>
<dbReference type="PIR" id="B86617">
    <property type="entry name" value="B86617"/>
</dbReference>
<dbReference type="RefSeq" id="NP_225207.1">
    <property type="nucleotide sequence ID" value="NC_000922.1"/>
</dbReference>
<dbReference type="RefSeq" id="WP_010883646.1">
    <property type="nucleotide sequence ID" value="NZ_LN847257.1"/>
</dbReference>
<dbReference type="SMR" id="Q9Z6P6"/>
<dbReference type="STRING" id="406984.CPK_ORF00439"/>
<dbReference type="GeneID" id="45051070"/>
<dbReference type="KEGG" id="cpa:CP_0840"/>
<dbReference type="KEGG" id="cpj:fumC"/>
<dbReference type="KEGG" id="cpn:CPn_1013"/>
<dbReference type="KEGG" id="cpt:CpB1051"/>
<dbReference type="PATRIC" id="fig|115713.3.peg.1110"/>
<dbReference type="eggNOG" id="COG0114">
    <property type="taxonomic scope" value="Bacteria"/>
</dbReference>
<dbReference type="HOGENOM" id="CLU_021594_4_1_0"/>
<dbReference type="OrthoDB" id="9802809at2"/>
<dbReference type="UniPathway" id="UPA00223">
    <property type="reaction ID" value="UER01007"/>
</dbReference>
<dbReference type="Proteomes" id="UP000000583">
    <property type="component" value="Chromosome"/>
</dbReference>
<dbReference type="Proteomes" id="UP000000801">
    <property type="component" value="Chromosome"/>
</dbReference>
<dbReference type="GO" id="GO:0005737">
    <property type="term" value="C:cytoplasm"/>
    <property type="evidence" value="ECO:0007669"/>
    <property type="project" value="UniProtKB-SubCell"/>
</dbReference>
<dbReference type="GO" id="GO:0004333">
    <property type="term" value="F:fumarate hydratase activity"/>
    <property type="evidence" value="ECO:0007669"/>
    <property type="project" value="UniProtKB-UniRule"/>
</dbReference>
<dbReference type="GO" id="GO:0006106">
    <property type="term" value="P:fumarate metabolic process"/>
    <property type="evidence" value="ECO:0007669"/>
    <property type="project" value="InterPro"/>
</dbReference>
<dbReference type="GO" id="GO:0006108">
    <property type="term" value="P:malate metabolic process"/>
    <property type="evidence" value="ECO:0007669"/>
    <property type="project" value="TreeGrafter"/>
</dbReference>
<dbReference type="GO" id="GO:0006099">
    <property type="term" value="P:tricarboxylic acid cycle"/>
    <property type="evidence" value="ECO:0007669"/>
    <property type="project" value="UniProtKB-UniRule"/>
</dbReference>
<dbReference type="CDD" id="cd01362">
    <property type="entry name" value="Fumarase_classII"/>
    <property type="match status" value="1"/>
</dbReference>
<dbReference type="FunFam" id="1.10.40.30:FF:000002">
    <property type="entry name" value="Fumarate hydratase class II"/>
    <property type="match status" value="1"/>
</dbReference>
<dbReference type="FunFam" id="1.10.275.10:FF:000001">
    <property type="entry name" value="Fumarate hydratase, mitochondrial"/>
    <property type="match status" value="1"/>
</dbReference>
<dbReference type="FunFam" id="1.20.200.10:FF:000001">
    <property type="entry name" value="Fumarate hydratase, mitochondrial"/>
    <property type="match status" value="1"/>
</dbReference>
<dbReference type="Gene3D" id="1.10.40.30">
    <property type="entry name" value="Fumarase/aspartase (C-terminal domain)"/>
    <property type="match status" value="1"/>
</dbReference>
<dbReference type="Gene3D" id="1.20.200.10">
    <property type="entry name" value="Fumarase/aspartase (Central domain)"/>
    <property type="match status" value="1"/>
</dbReference>
<dbReference type="Gene3D" id="1.10.275.10">
    <property type="entry name" value="Fumarase/aspartase (N-terminal domain)"/>
    <property type="match status" value="1"/>
</dbReference>
<dbReference type="HAMAP" id="MF_00743">
    <property type="entry name" value="FumaraseC"/>
    <property type="match status" value="1"/>
</dbReference>
<dbReference type="InterPro" id="IPR005677">
    <property type="entry name" value="Fum_hydII"/>
</dbReference>
<dbReference type="InterPro" id="IPR024083">
    <property type="entry name" value="Fumarase/histidase_N"/>
</dbReference>
<dbReference type="InterPro" id="IPR018951">
    <property type="entry name" value="Fumarase_C_C"/>
</dbReference>
<dbReference type="InterPro" id="IPR020557">
    <property type="entry name" value="Fumarate_lyase_CS"/>
</dbReference>
<dbReference type="InterPro" id="IPR000362">
    <property type="entry name" value="Fumarate_lyase_fam"/>
</dbReference>
<dbReference type="InterPro" id="IPR022761">
    <property type="entry name" value="Fumarate_lyase_N"/>
</dbReference>
<dbReference type="InterPro" id="IPR008948">
    <property type="entry name" value="L-Aspartase-like"/>
</dbReference>
<dbReference type="NCBIfam" id="TIGR00979">
    <property type="entry name" value="fumC_II"/>
    <property type="match status" value="1"/>
</dbReference>
<dbReference type="PANTHER" id="PTHR11444">
    <property type="entry name" value="ASPARTATEAMMONIA/ARGININOSUCCINATE/ADENYLOSUCCINATE LYASE"/>
    <property type="match status" value="1"/>
</dbReference>
<dbReference type="PANTHER" id="PTHR11444:SF1">
    <property type="entry name" value="FUMARATE HYDRATASE, MITOCHONDRIAL"/>
    <property type="match status" value="1"/>
</dbReference>
<dbReference type="Pfam" id="PF10415">
    <property type="entry name" value="FumaraseC_C"/>
    <property type="match status" value="1"/>
</dbReference>
<dbReference type="Pfam" id="PF00206">
    <property type="entry name" value="Lyase_1"/>
    <property type="match status" value="1"/>
</dbReference>
<dbReference type="PRINTS" id="PR00149">
    <property type="entry name" value="FUMRATELYASE"/>
</dbReference>
<dbReference type="SUPFAM" id="SSF48557">
    <property type="entry name" value="L-aspartase-like"/>
    <property type="match status" value="1"/>
</dbReference>
<dbReference type="PROSITE" id="PS00163">
    <property type="entry name" value="FUMARATE_LYASES"/>
    <property type="match status" value="1"/>
</dbReference>
<sequence>MRQEKDSLGIVEVPEDKLYGAQTMRSRNFFSWGPELMPYEVIRALVWIKKCAAQANQDLGFLDSKHCDMIVAAADEILEGGFEEHFPLKVWQTGSGTQSNMNVNEVIANLAIRHHGGVLGSKDPIHPNDHVNKSQSSNDVFPTAMHIAAVISLKNKLIPALDHMIRVLDAKVEEFRHDVKIGRTHLMDAVPMTLGQEFSGYSSQLRHCLESIAFSLAHLYELAIGATAVGTGLNVPEGFVEKIIHYLRKETDEPFIPASNYFSALSCHDALVDAHGSLATLACALTKIATDLSFLGSGPRCGLGELFFPENEPGSSIMPGKVNPTQCEALQMVCAQVLGNNQTVIIGGSRGNFELNVMKPVIIYNFLQSVDLLSEGMRAFSEFFVKGLKVNKARLQDNINNSLMLVTALAPVLGYDKCSKAALKAFHESISLKEACLALGYLSEKEFDRLVVPENMVGNH</sequence>
<reference key="1">
    <citation type="journal article" date="1999" name="Nat. Genet.">
        <title>Comparative genomes of Chlamydia pneumoniae and C. trachomatis.</title>
        <authorList>
            <person name="Kalman S."/>
            <person name="Mitchell W.P."/>
            <person name="Marathe R."/>
            <person name="Lammel C.J."/>
            <person name="Fan J."/>
            <person name="Hyman R.W."/>
            <person name="Olinger L."/>
            <person name="Grimwood J."/>
            <person name="Davis R.W."/>
            <person name="Stephens R.S."/>
        </authorList>
    </citation>
    <scope>NUCLEOTIDE SEQUENCE [LARGE SCALE GENOMIC DNA]</scope>
    <source>
        <strain>CWL029</strain>
    </source>
</reference>
<reference key="2">
    <citation type="journal article" date="2000" name="Nucleic Acids Res.">
        <title>Genome sequences of Chlamydia trachomatis MoPn and Chlamydia pneumoniae AR39.</title>
        <authorList>
            <person name="Read T.D."/>
            <person name="Brunham R.C."/>
            <person name="Shen C."/>
            <person name="Gill S.R."/>
            <person name="Heidelberg J.F."/>
            <person name="White O."/>
            <person name="Hickey E.K."/>
            <person name="Peterson J.D."/>
            <person name="Utterback T.R."/>
            <person name="Berry K.J."/>
            <person name="Bass S."/>
            <person name="Linher K.D."/>
            <person name="Weidman J.F."/>
            <person name="Khouri H.M."/>
            <person name="Craven B."/>
            <person name="Bowman C."/>
            <person name="Dodson R.J."/>
            <person name="Gwinn M.L."/>
            <person name="Nelson W.C."/>
            <person name="DeBoy R.T."/>
            <person name="Kolonay J.F."/>
            <person name="McClarty G."/>
            <person name="Salzberg S.L."/>
            <person name="Eisen J.A."/>
            <person name="Fraser C.M."/>
        </authorList>
    </citation>
    <scope>NUCLEOTIDE SEQUENCE [LARGE SCALE GENOMIC DNA]</scope>
    <source>
        <strain>AR39</strain>
    </source>
</reference>
<reference key="3">
    <citation type="journal article" date="2000" name="Nucleic Acids Res.">
        <title>Comparison of whole genome sequences of Chlamydia pneumoniae J138 from Japan and CWL029 from USA.</title>
        <authorList>
            <person name="Shirai M."/>
            <person name="Hirakawa H."/>
            <person name="Kimoto M."/>
            <person name="Tabuchi M."/>
            <person name="Kishi F."/>
            <person name="Ouchi K."/>
            <person name="Shiba T."/>
            <person name="Ishii K."/>
            <person name="Hattori M."/>
            <person name="Kuhara S."/>
            <person name="Nakazawa T."/>
        </authorList>
    </citation>
    <scope>NUCLEOTIDE SEQUENCE [LARGE SCALE GENOMIC DNA]</scope>
    <source>
        <strain>J138</strain>
    </source>
</reference>
<reference key="4">
    <citation type="submission" date="2002-05" db="EMBL/GenBank/DDBJ databases">
        <title>The genome sequence of Chlamydia pneumoniae TW183 and comparison with other Chlamydia strains based on whole genome sequence analysis.</title>
        <authorList>
            <person name="Geng M.M."/>
            <person name="Schuhmacher A."/>
            <person name="Muehldorfer I."/>
            <person name="Bensch K.W."/>
            <person name="Schaefer K.P."/>
            <person name="Schneider S."/>
            <person name="Pohl T."/>
            <person name="Essig A."/>
            <person name="Marre R."/>
            <person name="Melchers K."/>
        </authorList>
    </citation>
    <scope>NUCLEOTIDE SEQUENCE [LARGE SCALE GENOMIC DNA]</scope>
    <source>
        <strain>TW-183</strain>
    </source>
</reference>
<name>FUMC_CHLPN</name>
<proteinExistence type="inferred from homology"/>